<proteinExistence type="inferred from homology"/>
<reference key="1">
    <citation type="submission" date="2003-03" db="EMBL/GenBank/DDBJ databases">
        <title>The complete genome sequence of Neisseria gonorrhoeae.</title>
        <authorList>
            <person name="Lewis L.A."/>
            <person name="Gillaspy A.F."/>
            <person name="McLaughlin R.E."/>
            <person name="Gipson M."/>
            <person name="Ducey T.F."/>
            <person name="Ownbey T."/>
            <person name="Hartman K."/>
            <person name="Nydick C."/>
            <person name="Carson M.B."/>
            <person name="Vaughn J."/>
            <person name="Thomson C."/>
            <person name="Song L."/>
            <person name="Lin S."/>
            <person name="Yuan X."/>
            <person name="Najar F."/>
            <person name="Zhan M."/>
            <person name="Ren Q."/>
            <person name="Zhu H."/>
            <person name="Qi S."/>
            <person name="Kenton S.M."/>
            <person name="Lai H."/>
            <person name="White J.D."/>
            <person name="Clifton S."/>
            <person name="Roe B.A."/>
            <person name="Dyer D.W."/>
        </authorList>
    </citation>
    <scope>NUCLEOTIDE SEQUENCE [LARGE SCALE GENOMIC DNA]</scope>
    <source>
        <strain>ATCC 700825 / FA 1090</strain>
    </source>
</reference>
<sequence length="303" mass="33523">MTKTQLHLNNFLTLAQEAGSLPKLAKLCGYRTPVALYKLKQRLEKQAEDPDARGIRPSLMAKLEKHTGKPKGWLDRKHRERTVPETAAESTGTAETRIAETASAAGCRSVTVNRNTCETQITVSINLDGSGKSRLDTGVPFLEHMIDQIARHGMIDIDISCKGDLHIDDHHTAEDIGITLGQAIRQALGDKKGIRRYGHSYVPLDEALSRVVIDLSGRPGLVYNIEFTRTLIGRFDVDLFEEFFHGIVNHSMMTLHIDNLSGKNAHHQAETVFKAFGRALRMAVEHDPRMAGQTPSTKGTLTA</sequence>
<comment type="catalytic activity">
    <reaction evidence="1">
        <text>D-erythro-1-(imidazol-4-yl)glycerol 3-phosphate = 3-(imidazol-4-yl)-2-oxopropyl phosphate + H2O</text>
        <dbReference type="Rhea" id="RHEA:11040"/>
        <dbReference type="ChEBI" id="CHEBI:15377"/>
        <dbReference type="ChEBI" id="CHEBI:57766"/>
        <dbReference type="ChEBI" id="CHEBI:58278"/>
        <dbReference type="EC" id="4.2.1.19"/>
    </reaction>
</comment>
<comment type="pathway">
    <text evidence="1">Amino-acid biosynthesis; L-histidine biosynthesis; L-histidine from 5-phospho-alpha-D-ribose 1-diphosphate: step 6/9.</text>
</comment>
<comment type="subcellular location">
    <subcellularLocation>
        <location evidence="1">Cytoplasm</location>
    </subcellularLocation>
</comment>
<comment type="similarity">
    <text evidence="1">Belongs to the imidazoleglycerol-phosphate dehydratase family.</text>
</comment>
<organism>
    <name type="scientific">Neisseria gonorrhoeae (strain ATCC 700825 / FA 1090)</name>
    <dbReference type="NCBI Taxonomy" id="242231"/>
    <lineage>
        <taxon>Bacteria</taxon>
        <taxon>Pseudomonadati</taxon>
        <taxon>Pseudomonadota</taxon>
        <taxon>Betaproteobacteria</taxon>
        <taxon>Neisseriales</taxon>
        <taxon>Neisseriaceae</taxon>
        <taxon>Neisseria</taxon>
    </lineage>
</organism>
<feature type="chain" id="PRO_0000336325" description="Imidazoleglycerol-phosphate dehydratase">
    <location>
        <begin position="1"/>
        <end position="303"/>
    </location>
</feature>
<accession>Q5F7D6</accession>
<protein>
    <recommendedName>
        <fullName evidence="1">Imidazoleglycerol-phosphate dehydratase</fullName>
        <shortName evidence="1">IGPD</shortName>
        <ecNumber evidence="1">4.2.1.19</ecNumber>
    </recommendedName>
</protein>
<keyword id="KW-0028">Amino-acid biosynthesis</keyword>
<keyword id="KW-0963">Cytoplasm</keyword>
<keyword id="KW-0368">Histidine biosynthesis</keyword>
<keyword id="KW-0456">Lyase</keyword>
<keyword id="KW-1185">Reference proteome</keyword>
<evidence type="ECO:0000255" key="1">
    <source>
        <dbReference type="HAMAP-Rule" id="MF_00076"/>
    </source>
</evidence>
<name>HIS7_NEIG1</name>
<dbReference type="EC" id="4.2.1.19" evidence="1"/>
<dbReference type="EMBL" id="AE004969">
    <property type="protein sequence ID" value="AAW89901.2"/>
    <property type="molecule type" value="Genomic_DNA"/>
</dbReference>
<dbReference type="RefSeq" id="WP_164920404.1">
    <property type="nucleotide sequence ID" value="NC_002946.2"/>
</dbReference>
<dbReference type="SMR" id="Q5F7D6"/>
<dbReference type="STRING" id="242231.NGO_1242"/>
<dbReference type="KEGG" id="ngo:NGO_1242"/>
<dbReference type="HOGENOM" id="CLU_044308_1_1_4"/>
<dbReference type="UniPathway" id="UPA00031">
    <property type="reaction ID" value="UER00011"/>
</dbReference>
<dbReference type="Proteomes" id="UP000000535">
    <property type="component" value="Chromosome"/>
</dbReference>
<dbReference type="GO" id="GO:0005737">
    <property type="term" value="C:cytoplasm"/>
    <property type="evidence" value="ECO:0007669"/>
    <property type="project" value="UniProtKB-SubCell"/>
</dbReference>
<dbReference type="GO" id="GO:0004424">
    <property type="term" value="F:imidazoleglycerol-phosphate dehydratase activity"/>
    <property type="evidence" value="ECO:0007669"/>
    <property type="project" value="UniProtKB-UniRule"/>
</dbReference>
<dbReference type="GO" id="GO:0000105">
    <property type="term" value="P:L-histidine biosynthetic process"/>
    <property type="evidence" value="ECO:0007669"/>
    <property type="project" value="UniProtKB-UniRule"/>
</dbReference>
<dbReference type="CDD" id="cd07914">
    <property type="entry name" value="IGPD"/>
    <property type="match status" value="1"/>
</dbReference>
<dbReference type="FunFam" id="3.30.230.40:FF:000002">
    <property type="entry name" value="Imidazoleglycerol-phosphate dehydratase"/>
    <property type="match status" value="1"/>
</dbReference>
<dbReference type="FunFam" id="3.30.230.40:FF:000003">
    <property type="entry name" value="Imidazoleglycerol-phosphate dehydratase HisB"/>
    <property type="match status" value="1"/>
</dbReference>
<dbReference type="Gene3D" id="3.30.230.40">
    <property type="entry name" value="Imidazole glycerol phosphate dehydratase, domain 1"/>
    <property type="match status" value="2"/>
</dbReference>
<dbReference type="HAMAP" id="MF_00076">
    <property type="entry name" value="HisB"/>
    <property type="match status" value="1"/>
</dbReference>
<dbReference type="InterPro" id="IPR038494">
    <property type="entry name" value="IGPD_sf"/>
</dbReference>
<dbReference type="InterPro" id="IPR000807">
    <property type="entry name" value="ImidazoleglycerolP_deHydtase"/>
</dbReference>
<dbReference type="InterPro" id="IPR020565">
    <property type="entry name" value="ImidazoleglycerP_deHydtase_CS"/>
</dbReference>
<dbReference type="InterPro" id="IPR020568">
    <property type="entry name" value="Ribosomal_Su5_D2-typ_SF"/>
</dbReference>
<dbReference type="NCBIfam" id="NF002106">
    <property type="entry name" value="PRK00951.1-1"/>
    <property type="match status" value="1"/>
</dbReference>
<dbReference type="NCBIfam" id="NF002109">
    <property type="entry name" value="PRK00951.1-5"/>
    <property type="match status" value="1"/>
</dbReference>
<dbReference type="NCBIfam" id="NF002111">
    <property type="entry name" value="PRK00951.2-1"/>
    <property type="match status" value="1"/>
</dbReference>
<dbReference type="NCBIfam" id="NF002114">
    <property type="entry name" value="PRK00951.2-4"/>
    <property type="match status" value="1"/>
</dbReference>
<dbReference type="PANTHER" id="PTHR23133:SF2">
    <property type="entry name" value="IMIDAZOLEGLYCEROL-PHOSPHATE DEHYDRATASE"/>
    <property type="match status" value="1"/>
</dbReference>
<dbReference type="PANTHER" id="PTHR23133">
    <property type="entry name" value="IMIDAZOLEGLYCEROL-PHOSPHATE DEHYDRATASE HIS7"/>
    <property type="match status" value="1"/>
</dbReference>
<dbReference type="Pfam" id="PF00475">
    <property type="entry name" value="IGPD"/>
    <property type="match status" value="1"/>
</dbReference>
<dbReference type="SUPFAM" id="SSF54211">
    <property type="entry name" value="Ribosomal protein S5 domain 2-like"/>
    <property type="match status" value="2"/>
</dbReference>
<dbReference type="PROSITE" id="PS00954">
    <property type="entry name" value="IGP_DEHYDRATASE_1"/>
    <property type="match status" value="1"/>
</dbReference>
<dbReference type="PROSITE" id="PS00955">
    <property type="entry name" value="IGP_DEHYDRATASE_2"/>
    <property type="match status" value="1"/>
</dbReference>
<gene>
    <name evidence="1" type="primary">hisB</name>
    <name type="ordered locus">NGO_1242</name>
</gene>